<sequence length="202" mass="22396">MSAKAATKNATKVAVKAPEATTPVETKKSKKDNVMRGLRIEKLVLNICVGESGDRLVRAAKVLEQLTGQTPVYSKARYTVRSFNIRRNEQIAAHVTVRGEKAAEILEKGLKVREFELRARNFSTQGSFGFGIQEHIDLGIKYDPSIGIYGMDFFVVLSRPGFRVAHKKRAGAKVGFQHKIGKEDAVNWFKTTYDGIVIGGKK</sequence>
<name>RL11_DICDI</name>
<proteinExistence type="evidence at protein level"/>
<evidence type="ECO:0000250" key="1">
    <source>
        <dbReference type="UniProtKB" id="P0C0W9"/>
    </source>
</evidence>
<evidence type="ECO:0000256" key="2">
    <source>
        <dbReference type="SAM" id="MobiDB-lite"/>
    </source>
</evidence>
<evidence type="ECO:0000269" key="3">
    <source>
    </source>
</evidence>
<evidence type="ECO:0000305" key="4"/>
<reference key="1">
    <citation type="journal article" date="2005" name="Nature">
        <title>The genome of the social amoeba Dictyostelium discoideum.</title>
        <authorList>
            <person name="Eichinger L."/>
            <person name="Pachebat J.A."/>
            <person name="Gloeckner G."/>
            <person name="Rajandream M.A."/>
            <person name="Sucgang R."/>
            <person name="Berriman M."/>
            <person name="Song J."/>
            <person name="Olsen R."/>
            <person name="Szafranski K."/>
            <person name="Xu Q."/>
            <person name="Tunggal B."/>
            <person name="Kummerfeld S."/>
            <person name="Madera M."/>
            <person name="Konfortov B.A."/>
            <person name="Rivero F."/>
            <person name="Bankier A.T."/>
            <person name="Lehmann R."/>
            <person name="Hamlin N."/>
            <person name="Davies R."/>
            <person name="Gaudet P."/>
            <person name="Fey P."/>
            <person name="Pilcher K."/>
            <person name="Chen G."/>
            <person name="Saunders D."/>
            <person name="Sodergren E.J."/>
            <person name="Davis P."/>
            <person name="Kerhornou A."/>
            <person name="Nie X."/>
            <person name="Hall N."/>
            <person name="Anjard C."/>
            <person name="Hemphill L."/>
            <person name="Bason N."/>
            <person name="Farbrother P."/>
            <person name="Desany B."/>
            <person name="Just E."/>
            <person name="Morio T."/>
            <person name="Rost R."/>
            <person name="Churcher C.M."/>
            <person name="Cooper J."/>
            <person name="Haydock S."/>
            <person name="van Driessche N."/>
            <person name="Cronin A."/>
            <person name="Goodhead I."/>
            <person name="Muzny D.M."/>
            <person name="Mourier T."/>
            <person name="Pain A."/>
            <person name="Lu M."/>
            <person name="Harper D."/>
            <person name="Lindsay R."/>
            <person name="Hauser H."/>
            <person name="James K.D."/>
            <person name="Quiles M."/>
            <person name="Madan Babu M."/>
            <person name="Saito T."/>
            <person name="Buchrieser C."/>
            <person name="Wardroper A."/>
            <person name="Felder M."/>
            <person name="Thangavelu M."/>
            <person name="Johnson D."/>
            <person name="Knights A."/>
            <person name="Loulseged H."/>
            <person name="Mungall K.L."/>
            <person name="Oliver K."/>
            <person name="Price C."/>
            <person name="Quail M.A."/>
            <person name="Urushihara H."/>
            <person name="Hernandez J."/>
            <person name="Rabbinowitsch E."/>
            <person name="Steffen D."/>
            <person name="Sanders M."/>
            <person name="Ma J."/>
            <person name="Kohara Y."/>
            <person name="Sharp S."/>
            <person name="Simmonds M.N."/>
            <person name="Spiegler S."/>
            <person name="Tivey A."/>
            <person name="Sugano S."/>
            <person name="White B."/>
            <person name="Walker D."/>
            <person name="Woodward J.R."/>
            <person name="Winckler T."/>
            <person name="Tanaka Y."/>
            <person name="Shaulsky G."/>
            <person name="Schleicher M."/>
            <person name="Weinstock G.M."/>
            <person name="Rosenthal A."/>
            <person name="Cox E.C."/>
            <person name="Chisholm R.L."/>
            <person name="Gibbs R.A."/>
            <person name="Loomis W.F."/>
            <person name="Platzer M."/>
            <person name="Kay R.R."/>
            <person name="Williams J.G."/>
            <person name="Dear P.H."/>
            <person name="Noegel A.A."/>
            <person name="Barrell B.G."/>
            <person name="Kuspa A."/>
        </authorList>
    </citation>
    <scope>NUCLEOTIDE SEQUENCE [LARGE SCALE GENOMIC DNA]</scope>
    <source>
        <strain>AX4</strain>
    </source>
</reference>
<reference key="2">
    <citation type="submission" date="2010-01" db="UniProtKB">
        <authorList>
            <person name="Bienvenut W.V."/>
            <person name="Veltman D.M."/>
            <person name="Insall R.H."/>
        </authorList>
    </citation>
    <scope>PROTEIN SEQUENCE OF 13-27; 62-75 AND 180-202</scope>
    <scope>IDENTIFICATION BY MASS SPECTROMETRY</scope>
</reference>
<reference key="3">
    <citation type="journal article" date="1989" name="Nucleic Acids Res.">
        <title>Primary structure and regulation of vegetative specific genes of Dictyostelium discoideum.</title>
        <authorList>
            <person name="Singleton C.K."/>
            <person name="Manning S.S."/>
            <person name="Ken R."/>
        </authorList>
    </citation>
    <scope>NUCLEOTIDE SEQUENCE [GENOMIC DNA] OF 35-113</scope>
    <scope>DEVELOPMENTAL STAGE</scope>
    <source>
        <strain>AX3</strain>
    </source>
</reference>
<comment type="function">
    <text evidence="1">Component of the ribosome, a large ribonucleoprotein complex responsible for the synthesis of proteins in the cell. The small ribosomal subunit (SSU) binds messenger RNAs (mRNAs) and translates the encoded message by selecting cognate aminoacyl-transfer RNA (tRNA) molecules. The large subunit (LSU) contains the ribosomal catalytic site termed the peptidyl transferase center (PTC), which catalyzes the formation of peptide bonds, thereby polymerizing the amino acids delivered by tRNAs into a polypeptide chain. The nascent polypeptides leave the ribosome through a tunnel in the LSU and interact with protein factors that function in enzymatic processing, targeting, and the membrane insertion of nascent chains at the exit of the ribosomal tunnel.</text>
</comment>
<comment type="subunit">
    <text evidence="1">Component of the large ribosomal subunit.</text>
</comment>
<comment type="subcellular location">
    <subcellularLocation>
        <location evidence="1">Nucleus</location>
    </subcellularLocation>
    <subcellularLocation>
        <location evidence="1">Cytoplasm</location>
    </subcellularLocation>
</comment>
<comment type="developmental stage">
    <text evidence="3">Expressed under normal growth conditions and is deactivated upon initiation of development.</text>
</comment>
<comment type="similarity">
    <text evidence="4">Belongs to the universal ribosomal protein uL5 family.</text>
</comment>
<organism>
    <name type="scientific">Dictyostelium discoideum</name>
    <name type="common">Social amoeba</name>
    <dbReference type="NCBI Taxonomy" id="44689"/>
    <lineage>
        <taxon>Eukaryota</taxon>
        <taxon>Amoebozoa</taxon>
        <taxon>Evosea</taxon>
        <taxon>Eumycetozoa</taxon>
        <taxon>Dictyostelia</taxon>
        <taxon>Dictyosteliales</taxon>
        <taxon>Dictyosteliaceae</taxon>
        <taxon>Dictyostelium</taxon>
    </lineage>
</organism>
<keyword id="KW-0963">Cytoplasm</keyword>
<keyword id="KW-0903">Direct protein sequencing</keyword>
<keyword id="KW-0539">Nucleus</keyword>
<keyword id="KW-1185">Reference proteome</keyword>
<keyword id="KW-0687">Ribonucleoprotein</keyword>
<keyword id="KW-0689">Ribosomal protein</keyword>
<keyword id="KW-0694">RNA-binding</keyword>
<keyword id="KW-0699">rRNA-binding</keyword>
<protein>
    <recommendedName>
        <fullName evidence="4">Large ribosomal subunit protein uL5</fullName>
    </recommendedName>
    <alternativeName>
        <fullName>60S ribosomal protein L11</fullName>
    </alternativeName>
    <alternativeName>
        <fullName>Vegetative-specific protein V18</fullName>
    </alternativeName>
</protein>
<gene>
    <name type="primary">rpl11</name>
    <name type="synonym">rpgC</name>
    <name type="synonym">V18</name>
    <name type="ORF">DDB_G0279189</name>
</gene>
<dbReference type="EMBL" id="AAFI02000030">
    <property type="protein sequence ID" value="EAL67743.1"/>
    <property type="molecule type" value="Genomic_DNA"/>
</dbReference>
<dbReference type="EMBL" id="X15382">
    <property type="protein sequence ID" value="CAA33442.1"/>
    <property type="molecule type" value="Genomic_DNA"/>
</dbReference>
<dbReference type="PIR" id="S07562">
    <property type="entry name" value="S07562"/>
</dbReference>
<dbReference type="RefSeq" id="XP_641729.1">
    <property type="nucleotide sequence ID" value="XM_636637.1"/>
</dbReference>
<dbReference type="SMR" id="P16168"/>
<dbReference type="FunCoup" id="P16168">
    <property type="interactions" value="444"/>
</dbReference>
<dbReference type="STRING" id="44689.P16168"/>
<dbReference type="PaxDb" id="44689-DDB0214853"/>
<dbReference type="EnsemblProtists" id="EAL67743">
    <property type="protein sequence ID" value="EAL67743"/>
    <property type="gene ID" value="DDB_G0279189"/>
</dbReference>
<dbReference type="GeneID" id="8621925"/>
<dbReference type="KEGG" id="ddi:DDB_G0279189"/>
<dbReference type="dictyBase" id="DDB_G0279189">
    <property type="gene designation" value="rpl11"/>
</dbReference>
<dbReference type="VEuPathDB" id="AmoebaDB:DDB_G0279189"/>
<dbReference type="eggNOG" id="KOG0397">
    <property type="taxonomic scope" value="Eukaryota"/>
</dbReference>
<dbReference type="HOGENOM" id="CLU_061015_3_0_1"/>
<dbReference type="InParanoid" id="P16168"/>
<dbReference type="OMA" id="NPMKELK"/>
<dbReference type="PhylomeDB" id="P16168"/>
<dbReference type="Reactome" id="R-DDI-156827">
    <property type="pathway name" value="L13a-mediated translational silencing of Ceruloplasmin expression"/>
</dbReference>
<dbReference type="Reactome" id="R-DDI-1799339">
    <property type="pathway name" value="SRP-dependent cotranslational protein targeting to membrane"/>
</dbReference>
<dbReference type="Reactome" id="R-DDI-72689">
    <property type="pathway name" value="Formation of a pool of free 40S subunits"/>
</dbReference>
<dbReference type="Reactome" id="R-DDI-72706">
    <property type="pathway name" value="GTP hydrolysis and joining of the 60S ribosomal subunit"/>
</dbReference>
<dbReference type="Reactome" id="R-DDI-975956">
    <property type="pathway name" value="Nonsense Mediated Decay (NMD) independent of the Exon Junction Complex (EJC)"/>
</dbReference>
<dbReference type="Reactome" id="R-DDI-975957">
    <property type="pathway name" value="Nonsense Mediated Decay (NMD) enhanced by the Exon Junction Complex (EJC)"/>
</dbReference>
<dbReference type="PRO" id="PR:P16168"/>
<dbReference type="Proteomes" id="UP000002195">
    <property type="component" value="Chromosome 3"/>
</dbReference>
<dbReference type="GO" id="GO:0022625">
    <property type="term" value="C:cytosolic large ribosomal subunit"/>
    <property type="evidence" value="ECO:0000318"/>
    <property type="project" value="GO_Central"/>
</dbReference>
<dbReference type="GO" id="GO:0031012">
    <property type="term" value="C:extracellular matrix"/>
    <property type="evidence" value="ECO:0007005"/>
    <property type="project" value="dictyBase"/>
</dbReference>
<dbReference type="GO" id="GO:0005634">
    <property type="term" value="C:nucleus"/>
    <property type="evidence" value="ECO:0007669"/>
    <property type="project" value="UniProtKB-SubCell"/>
</dbReference>
<dbReference type="GO" id="GO:0045335">
    <property type="term" value="C:phagocytic vesicle"/>
    <property type="evidence" value="ECO:0007005"/>
    <property type="project" value="dictyBase"/>
</dbReference>
<dbReference type="GO" id="GO:0003723">
    <property type="term" value="F:RNA binding"/>
    <property type="evidence" value="ECO:0000318"/>
    <property type="project" value="GO_Central"/>
</dbReference>
<dbReference type="GO" id="GO:0019843">
    <property type="term" value="F:rRNA binding"/>
    <property type="evidence" value="ECO:0007669"/>
    <property type="project" value="UniProtKB-KW"/>
</dbReference>
<dbReference type="GO" id="GO:0003735">
    <property type="term" value="F:structural constituent of ribosome"/>
    <property type="evidence" value="ECO:0000318"/>
    <property type="project" value="GO_Central"/>
</dbReference>
<dbReference type="GO" id="GO:0006412">
    <property type="term" value="P:translation"/>
    <property type="evidence" value="ECO:0000318"/>
    <property type="project" value="GO_Central"/>
</dbReference>
<dbReference type="FunFam" id="3.30.1440.10:FF:000004">
    <property type="entry name" value="60S ribosomal protein L11, putative"/>
    <property type="match status" value="1"/>
</dbReference>
<dbReference type="Gene3D" id="3.30.1440.10">
    <property type="match status" value="1"/>
</dbReference>
<dbReference type="InterPro" id="IPR002132">
    <property type="entry name" value="Ribosomal_uL5"/>
</dbReference>
<dbReference type="InterPro" id="IPR031309">
    <property type="entry name" value="Ribosomal_uL5_C"/>
</dbReference>
<dbReference type="InterPro" id="IPR020929">
    <property type="entry name" value="Ribosomal_uL5_CS"/>
</dbReference>
<dbReference type="InterPro" id="IPR022803">
    <property type="entry name" value="Ribosomal_uL5_dom_sf"/>
</dbReference>
<dbReference type="InterPro" id="IPR031310">
    <property type="entry name" value="Ribosomal_uL5_N"/>
</dbReference>
<dbReference type="NCBIfam" id="NF003258">
    <property type="entry name" value="PRK04219.1"/>
    <property type="match status" value="1"/>
</dbReference>
<dbReference type="PANTHER" id="PTHR11994">
    <property type="entry name" value="60S RIBOSOMAL PROTEIN L11-RELATED"/>
    <property type="match status" value="1"/>
</dbReference>
<dbReference type="Pfam" id="PF00281">
    <property type="entry name" value="Ribosomal_L5"/>
    <property type="match status" value="1"/>
</dbReference>
<dbReference type="Pfam" id="PF00673">
    <property type="entry name" value="Ribosomal_L5_C"/>
    <property type="match status" value="1"/>
</dbReference>
<dbReference type="PIRSF" id="PIRSF002161">
    <property type="entry name" value="Ribosomal_L5"/>
    <property type="match status" value="1"/>
</dbReference>
<dbReference type="SUPFAM" id="SSF55282">
    <property type="entry name" value="RL5-like"/>
    <property type="match status" value="1"/>
</dbReference>
<dbReference type="PROSITE" id="PS00358">
    <property type="entry name" value="RIBOSOMAL_L5"/>
    <property type="match status" value="1"/>
</dbReference>
<feature type="chain" id="PRO_0000125088" description="Large ribosomal subunit protein uL5">
    <location>
        <begin position="1"/>
        <end position="202"/>
    </location>
</feature>
<feature type="region of interest" description="Disordered" evidence="2">
    <location>
        <begin position="1"/>
        <end position="30"/>
    </location>
</feature>
<feature type="compositionally biased region" description="Low complexity" evidence="2">
    <location>
        <begin position="1"/>
        <end position="17"/>
    </location>
</feature>
<feature type="sequence conflict" description="In Ref. 3; CAA33442." evidence="4" ref="3">
    <original>K</original>
    <variation>I</variation>
    <location>
        <position position="108"/>
    </location>
</feature>
<feature type="sequence conflict" description="In Ref. 3; CAA33442." evidence="4" ref="3">
    <original>K</original>
    <variation>N</variation>
    <location>
        <position position="111"/>
    </location>
</feature>
<accession>P16168</accession>
<accession>Q54X48</accession>